<feature type="chain" id="PRO_0000136906" description="Ribosome biogenesis protein RLP24">
    <location>
        <begin position="1"/>
        <end position="203"/>
    </location>
</feature>
<feature type="region of interest" description="Disordered" evidence="2">
    <location>
        <begin position="147"/>
        <end position="203"/>
    </location>
</feature>
<feature type="compositionally biased region" description="Acidic residues" evidence="2">
    <location>
        <begin position="155"/>
        <end position="184"/>
    </location>
</feature>
<feature type="compositionally biased region" description="Basic residues" evidence="2">
    <location>
        <begin position="191"/>
        <end position="203"/>
    </location>
</feature>
<name>RLP24_DEBHA</name>
<protein>
    <recommendedName>
        <fullName>Ribosome biogenesis protein RLP24</fullName>
    </recommendedName>
</protein>
<dbReference type="EMBL" id="CR382139">
    <property type="protein sequence ID" value="CAG90997.1"/>
    <property type="molecule type" value="Genomic_DNA"/>
</dbReference>
<dbReference type="RefSeq" id="XP_462487.1">
    <property type="nucleotide sequence ID" value="XM_462487.1"/>
</dbReference>
<dbReference type="SMR" id="Q6BH34"/>
<dbReference type="FunCoup" id="Q6BH34">
    <property type="interactions" value="1071"/>
</dbReference>
<dbReference type="STRING" id="284592.Q6BH34"/>
<dbReference type="GeneID" id="2905437"/>
<dbReference type="KEGG" id="dha:DEHA2G21714g"/>
<dbReference type="VEuPathDB" id="FungiDB:DEHA2G21714g"/>
<dbReference type="eggNOG" id="KOG1723">
    <property type="taxonomic scope" value="Eukaryota"/>
</dbReference>
<dbReference type="HOGENOM" id="CLU_089419_1_1_1"/>
<dbReference type="InParanoid" id="Q6BH34"/>
<dbReference type="OMA" id="NAGKEMT"/>
<dbReference type="OrthoDB" id="10262490at2759"/>
<dbReference type="Proteomes" id="UP000000599">
    <property type="component" value="Chromosome G"/>
</dbReference>
<dbReference type="GO" id="GO:0005737">
    <property type="term" value="C:cytoplasm"/>
    <property type="evidence" value="ECO:0007669"/>
    <property type="project" value="UniProtKB-SubCell"/>
</dbReference>
<dbReference type="GO" id="GO:0005730">
    <property type="term" value="C:nucleolus"/>
    <property type="evidence" value="ECO:0007669"/>
    <property type="project" value="EnsemblFungi"/>
</dbReference>
<dbReference type="GO" id="GO:0030687">
    <property type="term" value="C:preribosome, large subunit precursor"/>
    <property type="evidence" value="ECO:0007669"/>
    <property type="project" value="EnsemblFungi"/>
</dbReference>
<dbReference type="GO" id="GO:0001671">
    <property type="term" value="F:ATPase activator activity"/>
    <property type="evidence" value="ECO:0007669"/>
    <property type="project" value="EnsemblFungi"/>
</dbReference>
<dbReference type="GO" id="GO:0051117">
    <property type="term" value="F:ATPase binding"/>
    <property type="evidence" value="ECO:0007669"/>
    <property type="project" value="EnsemblFungi"/>
</dbReference>
<dbReference type="GO" id="GO:0003735">
    <property type="term" value="F:structural constituent of ribosome"/>
    <property type="evidence" value="ECO:0007669"/>
    <property type="project" value="InterPro"/>
</dbReference>
<dbReference type="GO" id="GO:1902626">
    <property type="term" value="P:assembly of large subunit precursor of preribosome"/>
    <property type="evidence" value="ECO:0007669"/>
    <property type="project" value="EnsemblFungi"/>
</dbReference>
<dbReference type="CDD" id="cd00472">
    <property type="entry name" value="Ribosomal_L24e_L24"/>
    <property type="match status" value="1"/>
</dbReference>
<dbReference type="FunFam" id="2.30.170.20:FF:000001">
    <property type="entry name" value="probable ribosome biogenesis protein RLP24"/>
    <property type="match status" value="1"/>
</dbReference>
<dbReference type="Gene3D" id="2.30.170.20">
    <property type="entry name" value="Ribosomal protein L24e"/>
    <property type="match status" value="1"/>
</dbReference>
<dbReference type="InterPro" id="IPR038630">
    <property type="entry name" value="L24e/L24_sf"/>
</dbReference>
<dbReference type="InterPro" id="IPR056366">
    <property type="entry name" value="Ribosomal_eL24"/>
</dbReference>
<dbReference type="InterPro" id="IPR000988">
    <property type="entry name" value="Ribosomal_eL24-rel_N"/>
</dbReference>
<dbReference type="InterPro" id="IPR011017">
    <property type="entry name" value="TRASH_dom"/>
</dbReference>
<dbReference type="PANTHER" id="PTHR10792">
    <property type="entry name" value="60S RIBOSOMAL PROTEIN L24"/>
    <property type="match status" value="1"/>
</dbReference>
<dbReference type="PANTHER" id="PTHR10792:SF8">
    <property type="entry name" value="RIBOSOME BIOGENESIS PROTEIN RLP24-RELATED"/>
    <property type="match status" value="1"/>
</dbReference>
<dbReference type="Pfam" id="PF01246">
    <property type="entry name" value="Ribosomal_L24e"/>
    <property type="match status" value="1"/>
</dbReference>
<dbReference type="SMART" id="SM00746">
    <property type="entry name" value="TRASH"/>
    <property type="match status" value="1"/>
</dbReference>
<dbReference type="SUPFAM" id="SSF57716">
    <property type="entry name" value="Glucocorticoid receptor-like (DNA-binding domain)"/>
    <property type="match status" value="1"/>
</dbReference>
<reference key="1">
    <citation type="journal article" date="2004" name="Nature">
        <title>Genome evolution in yeasts.</title>
        <authorList>
            <person name="Dujon B."/>
            <person name="Sherman D."/>
            <person name="Fischer G."/>
            <person name="Durrens P."/>
            <person name="Casaregola S."/>
            <person name="Lafontaine I."/>
            <person name="de Montigny J."/>
            <person name="Marck C."/>
            <person name="Neuveglise C."/>
            <person name="Talla E."/>
            <person name="Goffard N."/>
            <person name="Frangeul L."/>
            <person name="Aigle M."/>
            <person name="Anthouard V."/>
            <person name="Babour A."/>
            <person name="Barbe V."/>
            <person name="Barnay S."/>
            <person name="Blanchin S."/>
            <person name="Beckerich J.-M."/>
            <person name="Beyne E."/>
            <person name="Bleykasten C."/>
            <person name="Boisrame A."/>
            <person name="Boyer J."/>
            <person name="Cattolico L."/>
            <person name="Confanioleri F."/>
            <person name="de Daruvar A."/>
            <person name="Despons L."/>
            <person name="Fabre E."/>
            <person name="Fairhead C."/>
            <person name="Ferry-Dumazet H."/>
            <person name="Groppi A."/>
            <person name="Hantraye F."/>
            <person name="Hennequin C."/>
            <person name="Jauniaux N."/>
            <person name="Joyet P."/>
            <person name="Kachouri R."/>
            <person name="Kerrest A."/>
            <person name="Koszul R."/>
            <person name="Lemaire M."/>
            <person name="Lesur I."/>
            <person name="Ma L."/>
            <person name="Muller H."/>
            <person name="Nicaud J.-M."/>
            <person name="Nikolski M."/>
            <person name="Oztas S."/>
            <person name="Ozier-Kalogeropoulos O."/>
            <person name="Pellenz S."/>
            <person name="Potier S."/>
            <person name="Richard G.-F."/>
            <person name="Straub M.-L."/>
            <person name="Suleau A."/>
            <person name="Swennen D."/>
            <person name="Tekaia F."/>
            <person name="Wesolowski-Louvel M."/>
            <person name="Westhof E."/>
            <person name="Wirth B."/>
            <person name="Zeniou-Meyer M."/>
            <person name="Zivanovic Y."/>
            <person name="Bolotin-Fukuhara M."/>
            <person name="Thierry A."/>
            <person name="Bouchier C."/>
            <person name="Caudron B."/>
            <person name="Scarpelli C."/>
            <person name="Gaillardin C."/>
            <person name="Weissenbach J."/>
            <person name="Wincker P."/>
            <person name="Souciet J.-L."/>
        </authorList>
    </citation>
    <scope>NUCLEOTIDE SEQUENCE [LARGE SCALE GENOMIC DNA]</scope>
    <source>
        <strain>ATCC 36239 / CBS 767 / BCRC 21394 / JCM 1990 / NBRC 0083 / IGC 2968</strain>
    </source>
</reference>
<keyword id="KW-0963">Cytoplasm</keyword>
<keyword id="KW-0539">Nucleus</keyword>
<keyword id="KW-1185">Reference proteome</keyword>
<keyword id="KW-0690">Ribosome biogenesis</keyword>
<organism>
    <name type="scientific">Debaryomyces hansenii (strain ATCC 36239 / CBS 767 / BCRC 21394 / JCM 1990 / NBRC 0083 / IGC 2968)</name>
    <name type="common">Yeast</name>
    <name type="synonym">Torulaspora hansenii</name>
    <dbReference type="NCBI Taxonomy" id="284592"/>
    <lineage>
        <taxon>Eukaryota</taxon>
        <taxon>Fungi</taxon>
        <taxon>Dikarya</taxon>
        <taxon>Ascomycota</taxon>
        <taxon>Saccharomycotina</taxon>
        <taxon>Pichiomycetes</taxon>
        <taxon>Debaryomycetaceae</taxon>
        <taxon>Debaryomyces</taxon>
    </lineage>
</organism>
<accession>Q6BH34</accession>
<gene>
    <name type="primary">RLP24</name>
    <name type="ordered locus">DEHA2G21714g</name>
</gene>
<evidence type="ECO:0000250" key="1">
    <source>
        <dbReference type="UniProtKB" id="Q07915"/>
    </source>
</evidence>
<evidence type="ECO:0000256" key="2">
    <source>
        <dbReference type="SAM" id="MobiDB-lite"/>
    </source>
</evidence>
<evidence type="ECO:0000305" key="3"/>
<sequence>MRVYSCHFCSSPVYPLHGIMFVRNDAKEFRFCRSKCHHAFKQRRNPRKLRWTKAFRKAAGKELVVDSTLTFAARRNVPVRYNRDLVATTLKTMARVEEIRQKRERAFYKNRMRGNKDKKLALDRRLVEQNPQLLKIRDVELRRKAERKAAKENAMDEEIEDEEEEIASEDMMSEDEEMESESEAESTKQKVVLKNKKKSKRSN</sequence>
<proteinExistence type="inferred from homology"/>
<comment type="function">
    <text evidence="1">Involved in the biogenesis of the 60S ribosomal subunit. Ensures the docking of DEHA2D15950g/NOG1 to pre-60S particles. Activates and recruits ATPase AFG2 to cytoplasmic pre-60S ribosomal particles.</text>
</comment>
<comment type="subunit">
    <text evidence="1">Associated with nucleolar and cytoplasmic pre-60S particles. At the end of biogenesis it dissociates from cytoplasmic pre-60S particles and is likely to be exchanged for its ribosomal homolog, RPL24.</text>
</comment>
<comment type="subcellular location">
    <subcellularLocation>
        <location evidence="1">Cytoplasm</location>
    </subcellularLocation>
    <subcellularLocation>
        <location evidence="1">Nucleus</location>
    </subcellularLocation>
    <text evidence="1">Shuttles between the nucleus and the cytoplasm.</text>
</comment>
<comment type="similarity">
    <text evidence="3">Belongs to the eukaryotic ribosomal protein eL24 family.</text>
</comment>